<reference key="1">
    <citation type="submission" date="2006-03" db="EMBL/GenBank/DDBJ databases">
        <title>Complete sequence of Methylobacillus flagellatus KT.</title>
        <authorList>
            <consortium name="US DOE Joint Genome Institute"/>
            <person name="Copeland A."/>
            <person name="Lucas S."/>
            <person name="Lapidus A."/>
            <person name="Barry K."/>
            <person name="Detter J.C."/>
            <person name="Glavina del Rio T."/>
            <person name="Hammon N."/>
            <person name="Israni S."/>
            <person name="Dalin E."/>
            <person name="Tice H."/>
            <person name="Pitluck S."/>
            <person name="Brettin T."/>
            <person name="Bruce D."/>
            <person name="Han C."/>
            <person name="Tapia R."/>
            <person name="Saunders E."/>
            <person name="Gilna P."/>
            <person name="Schmutz J."/>
            <person name="Larimer F."/>
            <person name="Land M."/>
            <person name="Kyrpides N."/>
            <person name="Anderson I."/>
            <person name="Richardson P."/>
        </authorList>
    </citation>
    <scope>NUCLEOTIDE SEQUENCE [LARGE SCALE GENOMIC DNA]</scope>
    <source>
        <strain>ATCC 51484 / DSM 6875 / VKM B-1610 / KT</strain>
    </source>
</reference>
<evidence type="ECO:0000255" key="1">
    <source>
        <dbReference type="HAMAP-Rule" id="MF_01521"/>
    </source>
</evidence>
<keyword id="KW-0997">Cell inner membrane</keyword>
<keyword id="KW-1003">Cell membrane</keyword>
<keyword id="KW-0406">Ion transport</keyword>
<keyword id="KW-0464">Manganese</keyword>
<keyword id="KW-0472">Membrane</keyword>
<keyword id="KW-1185">Reference proteome</keyword>
<keyword id="KW-0812">Transmembrane</keyword>
<keyword id="KW-1133">Transmembrane helix</keyword>
<keyword id="KW-0813">Transport</keyword>
<name>MNTP_METFK</name>
<feature type="chain" id="PRO_0000296930" description="Putative manganese efflux pump MntP">
    <location>
        <begin position="1"/>
        <end position="189"/>
    </location>
</feature>
<feature type="transmembrane region" description="Helical" evidence="1">
    <location>
        <begin position="3"/>
        <end position="23"/>
    </location>
</feature>
<feature type="transmembrane region" description="Helical" evidence="1">
    <location>
        <begin position="41"/>
        <end position="61"/>
    </location>
</feature>
<feature type="transmembrane region" description="Helical" evidence="1">
    <location>
        <begin position="62"/>
        <end position="82"/>
    </location>
</feature>
<feature type="transmembrane region" description="Helical" evidence="1">
    <location>
        <begin position="103"/>
        <end position="123"/>
    </location>
</feature>
<feature type="transmembrane region" description="Helical" evidence="1">
    <location>
        <begin position="132"/>
        <end position="152"/>
    </location>
</feature>
<feature type="transmembrane region" description="Helical" evidence="1">
    <location>
        <begin position="167"/>
        <end position="187"/>
    </location>
</feature>
<accession>Q1H1K6</accession>
<comment type="function">
    <text evidence="1">Probably functions as a manganese efflux pump.</text>
</comment>
<comment type="subcellular location">
    <subcellularLocation>
        <location evidence="1">Cell inner membrane</location>
        <topology evidence="1">Multi-pass membrane protein</topology>
    </subcellularLocation>
</comment>
<comment type="similarity">
    <text evidence="1">Belongs to the MntP (TC 9.B.29) family.</text>
</comment>
<sequence length="189" mass="19909">MNIVSTLLLALAMSADAFAAAVSKGAMLHRPRIIEALRTGMIFGVIEATTPLVGWSLGRVAADYVTAWDHWIAFSILAFLGIRMTWSGLKHDGKVVEKSRSHSFILLAMTALGTSIDAMSVGVSLAFLDIDIVPVAFAIGIVTCIMVSAGVMLGRVLGSASKHTVEIIGGLILIGIGSLILYKHLYGAA</sequence>
<gene>
    <name evidence="1" type="primary">mntP</name>
    <name type="ordered locus">Mfla_1363</name>
</gene>
<proteinExistence type="inferred from homology"/>
<dbReference type="EMBL" id="CP000284">
    <property type="protein sequence ID" value="ABE49631.1"/>
    <property type="molecule type" value="Genomic_DNA"/>
</dbReference>
<dbReference type="RefSeq" id="WP_011479585.1">
    <property type="nucleotide sequence ID" value="NC_007947.1"/>
</dbReference>
<dbReference type="KEGG" id="mfa:Mfla_1363"/>
<dbReference type="eggNOG" id="COG1971">
    <property type="taxonomic scope" value="Bacteria"/>
</dbReference>
<dbReference type="HOGENOM" id="CLU_096410_0_0_4"/>
<dbReference type="OrthoDB" id="9811590at2"/>
<dbReference type="Proteomes" id="UP000002440">
    <property type="component" value="Chromosome"/>
</dbReference>
<dbReference type="GO" id="GO:0005886">
    <property type="term" value="C:plasma membrane"/>
    <property type="evidence" value="ECO:0007669"/>
    <property type="project" value="UniProtKB-SubCell"/>
</dbReference>
<dbReference type="GO" id="GO:0005384">
    <property type="term" value="F:manganese ion transmembrane transporter activity"/>
    <property type="evidence" value="ECO:0007669"/>
    <property type="project" value="UniProtKB-UniRule"/>
</dbReference>
<dbReference type="HAMAP" id="MF_01521">
    <property type="entry name" value="MntP_pump"/>
    <property type="match status" value="1"/>
</dbReference>
<dbReference type="InterPro" id="IPR003810">
    <property type="entry name" value="Mntp/YtaF"/>
</dbReference>
<dbReference type="InterPro" id="IPR022929">
    <property type="entry name" value="Put_MntP"/>
</dbReference>
<dbReference type="PANTHER" id="PTHR35529">
    <property type="entry name" value="MANGANESE EFFLUX PUMP MNTP-RELATED"/>
    <property type="match status" value="1"/>
</dbReference>
<dbReference type="PANTHER" id="PTHR35529:SF1">
    <property type="entry name" value="MANGANESE EFFLUX PUMP MNTP-RELATED"/>
    <property type="match status" value="1"/>
</dbReference>
<dbReference type="Pfam" id="PF02659">
    <property type="entry name" value="Mntp"/>
    <property type="match status" value="1"/>
</dbReference>
<organism>
    <name type="scientific">Methylobacillus flagellatus (strain ATCC 51484 / DSM 6875 / VKM B-1610 / KT)</name>
    <dbReference type="NCBI Taxonomy" id="265072"/>
    <lineage>
        <taxon>Bacteria</taxon>
        <taxon>Pseudomonadati</taxon>
        <taxon>Pseudomonadota</taxon>
        <taxon>Betaproteobacteria</taxon>
        <taxon>Nitrosomonadales</taxon>
        <taxon>Methylophilaceae</taxon>
        <taxon>Methylobacillus</taxon>
    </lineage>
</organism>
<protein>
    <recommendedName>
        <fullName evidence="1">Putative manganese efflux pump MntP</fullName>
    </recommendedName>
</protein>